<keyword id="KW-0028">Amino-acid biosynthesis</keyword>
<keyword id="KW-0100">Branched-chain amino acid biosynthesis</keyword>
<keyword id="KW-0432">Leucine biosynthesis</keyword>
<keyword id="KW-0456">Lyase</keyword>
<gene>
    <name evidence="1" type="primary">leuD</name>
    <name type="ordered locus">NMCC_1161</name>
</gene>
<name>LEUD_NEIM0</name>
<organism>
    <name type="scientific">Neisseria meningitidis serogroup C (strain 053442)</name>
    <dbReference type="NCBI Taxonomy" id="374833"/>
    <lineage>
        <taxon>Bacteria</taxon>
        <taxon>Pseudomonadati</taxon>
        <taxon>Pseudomonadota</taxon>
        <taxon>Betaproteobacteria</taxon>
        <taxon>Neisseriales</taxon>
        <taxon>Neisseriaceae</taxon>
        <taxon>Neisseria</taxon>
    </lineage>
</organism>
<reference key="1">
    <citation type="journal article" date="2008" name="Genomics">
        <title>Characterization of ST-4821 complex, a unique Neisseria meningitidis clone.</title>
        <authorList>
            <person name="Peng J."/>
            <person name="Yang L."/>
            <person name="Yang F."/>
            <person name="Yang J."/>
            <person name="Yan Y."/>
            <person name="Nie H."/>
            <person name="Zhang X."/>
            <person name="Xiong Z."/>
            <person name="Jiang Y."/>
            <person name="Cheng F."/>
            <person name="Xu X."/>
            <person name="Chen S."/>
            <person name="Sun L."/>
            <person name="Li W."/>
            <person name="Shen Y."/>
            <person name="Shao Z."/>
            <person name="Liang X."/>
            <person name="Xu J."/>
            <person name="Jin Q."/>
        </authorList>
    </citation>
    <scope>NUCLEOTIDE SEQUENCE [LARGE SCALE GENOMIC DNA]</scope>
    <source>
        <strain>053442</strain>
    </source>
</reference>
<accession>A9LZF9</accession>
<sequence>MKAFTKITAIVAPLDRSNVDTDAIIPKQFLKSIKRSGFGPNAFDEWRYLDHGEPGMDNSKRPLNPDFSLNQPRYQGAQILLTRKNFGCGSSREHAPWALDDYGFRAVIAPSFADIFFNNCYKNGLLPIVLTEEQVDRLFKEVEANEGYQLSIDLAEQTLTTPSGETFTFDITEHRKHCLLNGLDEIGLTLQHADEIHAFEEKRRQSQPWLFNG</sequence>
<feature type="chain" id="PRO_1000084258" description="3-isopropylmalate dehydratase small subunit">
    <location>
        <begin position="1"/>
        <end position="213"/>
    </location>
</feature>
<evidence type="ECO:0000255" key="1">
    <source>
        <dbReference type="HAMAP-Rule" id="MF_01031"/>
    </source>
</evidence>
<dbReference type="EC" id="4.2.1.33" evidence="1"/>
<dbReference type="EMBL" id="CP000381">
    <property type="protein sequence ID" value="ABX73335.1"/>
    <property type="molecule type" value="Genomic_DNA"/>
</dbReference>
<dbReference type="RefSeq" id="WP_002234920.1">
    <property type="nucleotide sequence ID" value="NC_010120.1"/>
</dbReference>
<dbReference type="SMR" id="A9LZF9"/>
<dbReference type="KEGG" id="nmn:NMCC_1161"/>
<dbReference type="HOGENOM" id="CLU_081378_0_3_4"/>
<dbReference type="UniPathway" id="UPA00048">
    <property type="reaction ID" value="UER00071"/>
</dbReference>
<dbReference type="Proteomes" id="UP000001177">
    <property type="component" value="Chromosome"/>
</dbReference>
<dbReference type="GO" id="GO:0009316">
    <property type="term" value="C:3-isopropylmalate dehydratase complex"/>
    <property type="evidence" value="ECO:0007669"/>
    <property type="project" value="InterPro"/>
</dbReference>
<dbReference type="GO" id="GO:0003861">
    <property type="term" value="F:3-isopropylmalate dehydratase activity"/>
    <property type="evidence" value="ECO:0007669"/>
    <property type="project" value="UniProtKB-UniRule"/>
</dbReference>
<dbReference type="GO" id="GO:0009098">
    <property type="term" value="P:L-leucine biosynthetic process"/>
    <property type="evidence" value="ECO:0007669"/>
    <property type="project" value="UniProtKB-UniRule"/>
</dbReference>
<dbReference type="CDD" id="cd01577">
    <property type="entry name" value="IPMI_Swivel"/>
    <property type="match status" value="1"/>
</dbReference>
<dbReference type="FunFam" id="3.20.19.10:FF:000003">
    <property type="entry name" value="3-isopropylmalate dehydratase small subunit"/>
    <property type="match status" value="1"/>
</dbReference>
<dbReference type="Gene3D" id="3.20.19.10">
    <property type="entry name" value="Aconitase, domain 4"/>
    <property type="match status" value="1"/>
</dbReference>
<dbReference type="HAMAP" id="MF_01031">
    <property type="entry name" value="LeuD_type1"/>
    <property type="match status" value="1"/>
</dbReference>
<dbReference type="InterPro" id="IPR004431">
    <property type="entry name" value="3-IsopropMal_deHydase_ssu"/>
</dbReference>
<dbReference type="InterPro" id="IPR015928">
    <property type="entry name" value="Aconitase/3IPM_dehydase_swvl"/>
</dbReference>
<dbReference type="InterPro" id="IPR000573">
    <property type="entry name" value="AconitaseA/IPMdHydase_ssu_swvl"/>
</dbReference>
<dbReference type="InterPro" id="IPR033940">
    <property type="entry name" value="IPMI_Swivel"/>
</dbReference>
<dbReference type="InterPro" id="IPR050075">
    <property type="entry name" value="LeuD"/>
</dbReference>
<dbReference type="NCBIfam" id="TIGR00171">
    <property type="entry name" value="leuD"/>
    <property type="match status" value="1"/>
</dbReference>
<dbReference type="NCBIfam" id="NF002458">
    <property type="entry name" value="PRK01641.1"/>
    <property type="match status" value="1"/>
</dbReference>
<dbReference type="PANTHER" id="PTHR43345:SF5">
    <property type="entry name" value="3-ISOPROPYLMALATE DEHYDRATASE SMALL SUBUNIT"/>
    <property type="match status" value="1"/>
</dbReference>
<dbReference type="PANTHER" id="PTHR43345">
    <property type="entry name" value="3-ISOPROPYLMALATE DEHYDRATASE SMALL SUBUNIT 2-RELATED-RELATED"/>
    <property type="match status" value="1"/>
</dbReference>
<dbReference type="Pfam" id="PF00694">
    <property type="entry name" value="Aconitase_C"/>
    <property type="match status" value="1"/>
</dbReference>
<dbReference type="SUPFAM" id="SSF52016">
    <property type="entry name" value="LeuD/IlvD-like"/>
    <property type="match status" value="1"/>
</dbReference>
<protein>
    <recommendedName>
        <fullName evidence="1">3-isopropylmalate dehydratase small subunit</fullName>
        <ecNumber evidence="1">4.2.1.33</ecNumber>
    </recommendedName>
    <alternativeName>
        <fullName evidence="1">Alpha-IPM isomerase</fullName>
        <shortName evidence="1">IPMI</shortName>
    </alternativeName>
    <alternativeName>
        <fullName evidence="1">Isopropylmalate isomerase</fullName>
    </alternativeName>
</protein>
<proteinExistence type="inferred from homology"/>
<comment type="function">
    <text evidence="1">Catalyzes the isomerization between 2-isopropylmalate and 3-isopropylmalate, via the formation of 2-isopropylmaleate.</text>
</comment>
<comment type="catalytic activity">
    <reaction evidence="1">
        <text>(2R,3S)-3-isopropylmalate = (2S)-2-isopropylmalate</text>
        <dbReference type="Rhea" id="RHEA:32287"/>
        <dbReference type="ChEBI" id="CHEBI:1178"/>
        <dbReference type="ChEBI" id="CHEBI:35121"/>
        <dbReference type="EC" id="4.2.1.33"/>
    </reaction>
</comment>
<comment type="pathway">
    <text evidence="1">Amino-acid biosynthesis; L-leucine biosynthesis; L-leucine from 3-methyl-2-oxobutanoate: step 2/4.</text>
</comment>
<comment type="subunit">
    <text evidence="1">Heterodimer of LeuC and LeuD.</text>
</comment>
<comment type="similarity">
    <text evidence="1">Belongs to the LeuD family. LeuD type 1 subfamily.</text>
</comment>